<gene>
    <name evidence="1" type="primary">rpl16</name>
</gene>
<organism>
    <name type="scientific">Crucihimalaya wallichii</name>
    <name type="common">Rock-cress</name>
    <name type="synonym">Arabidopsis campestris</name>
    <dbReference type="NCBI Taxonomy" id="78192"/>
    <lineage>
        <taxon>Eukaryota</taxon>
        <taxon>Viridiplantae</taxon>
        <taxon>Streptophyta</taxon>
        <taxon>Embryophyta</taxon>
        <taxon>Tracheophyta</taxon>
        <taxon>Spermatophyta</taxon>
        <taxon>Magnoliopsida</taxon>
        <taxon>eudicotyledons</taxon>
        <taxon>Gunneridae</taxon>
        <taxon>Pentapetalae</taxon>
        <taxon>rosids</taxon>
        <taxon>malvids</taxon>
        <taxon>Brassicales</taxon>
        <taxon>Brassicaceae</taxon>
        <taxon>Crucihimalayeae</taxon>
        <taxon>Crucihimalaya</taxon>
    </lineage>
</organism>
<sequence>MLSPKRTRFRKQHRGRLKGISSRGNRICFGRYALQTLEPAWITSRQIEAGRRAMTRNVRRGGKIWVRIFPDKPVTVRPAETRMGSGKGSPEYWVAVVKPGKILYEMGGVPENIARKAISIAASKMPIKTQFIISE</sequence>
<keyword id="KW-0150">Chloroplast</keyword>
<keyword id="KW-0934">Plastid</keyword>
<keyword id="KW-0687">Ribonucleoprotein</keyword>
<keyword id="KW-0689">Ribosomal protein</keyword>
<name>RK16_CRUWA</name>
<geneLocation type="chloroplast"/>
<dbReference type="EMBL" id="AP009372">
    <property type="protein sequence ID" value="BAF50323.1"/>
    <property type="molecule type" value="Genomic_DNA"/>
</dbReference>
<dbReference type="RefSeq" id="YP_001123499.1">
    <property type="nucleotide sequence ID" value="NC_009271.1"/>
</dbReference>
<dbReference type="SMR" id="A4QKW8"/>
<dbReference type="GeneID" id="4962642"/>
<dbReference type="GO" id="GO:0009507">
    <property type="term" value="C:chloroplast"/>
    <property type="evidence" value="ECO:0007669"/>
    <property type="project" value="UniProtKB-SubCell"/>
</dbReference>
<dbReference type="GO" id="GO:0005762">
    <property type="term" value="C:mitochondrial large ribosomal subunit"/>
    <property type="evidence" value="ECO:0007669"/>
    <property type="project" value="TreeGrafter"/>
</dbReference>
<dbReference type="GO" id="GO:0019843">
    <property type="term" value="F:rRNA binding"/>
    <property type="evidence" value="ECO:0007669"/>
    <property type="project" value="InterPro"/>
</dbReference>
<dbReference type="GO" id="GO:0003735">
    <property type="term" value="F:structural constituent of ribosome"/>
    <property type="evidence" value="ECO:0007669"/>
    <property type="project" value="InterPro"/>
</dbReference>
<dbReference type="GO" id="GO:0032543">
    <property type="term" value="P:mitochondrial translation"/>
    <property type="evidence" value="ECO:0007669"/>
    <property type="project" value="TreeGrafter"/>
</dbReference>
<dbReference type="CDD" id="cd01433">
    <property type="entry name" value="Ribosomal_L16_L10e"/>
    <property type="match status" value="1"/>
</dbReference>
<dbReference type="FunFam" id="3.90.1170.10:FF:000001">
    <property type="entry name" value="50S ribosomal protein L16"/>
    <property type="match status" value="1"/>
</dbReference>
<dbReference type="Gene3D" id="3.90.1170.10">
    <property type="entry name" value="Ribosomal protein L10e/L16"/>
    <property type="match status" value="1"/>
</dbReference>
<dbReference type="HAMAP" id="MF_01342">
    <property type="entry name" value="Ribosomal_uL16"/>
    <property type="match status" value="1"/>
</dbReference>
<dbReference type="InterPro" id="IPR047873">
    <property type="entry name" value="Ribosomal_uL16"/>
</dbReference>
<dbReference type="InterPro" id="IPR000114">
    <property type="entry name" value="Ribosomal_uL16_bact-type"/>
</dbReference>
<dbReference type="InterPro" id="IPR020798">
    <property type="entry name" value="Ribosomal_uL16_CS"/>
</dbReference>
<dbReference type="InterPro" id="IPR016180">
    <property type="entry name" value="Ribosomal_uL16_dom"/>
</dbReference>
<dbReference type="InterPro" id="IPR036920">
    <property type="entry name" value="Ribosomal_uL16_sf"/>
</dbReference>
<dbReference type="NCBIfam" id="TIGR01164">
    <property type="entry name" value="rplP_bact"/>
    <property type="match status" value="1"/>
</dbReference>
<dbReference type="PANTHER" id="PTHR12220">
    <property type="entry name" value="50S/60S RIBOSOMAL PROTEIN L16"/>
    <property type="match status" value="1"/>
</dbReference>
<dbReference type="PANTHER" id="PTHR12220:SF13">
    <property type="entry name" value="LARGE RIBOSOMAL SUBUNIT PROTEIN UL16M"/>
    <property type="match status" value="1"/>
</dbReference>
<dbReference type="Pfam" id="PF00252">
    <property type="entry name" value="Ribosomal_L16"/>
    <property type="match status" value="1"/>
</dbReference>
<dbReference type="PRINTS" id="PR00060">
    <property type="entry name" value="RIBOSOMALL16"/>
</dbReference>
<dbReference type="SUPFAM" id="SSF54686">
    <property type="entry name" value="Ribosomal protein L16p/L10e"/>
    <property type="match status" value="1"/>
</dbReference>
<dbReference type="PROSITE" id="PS00586">
    <property type="entry name" value="RIBOSOMAL_L16_1"/>
    <property type="match status" value="1"/>
</dbReference>
<dbReference type="PROSITE" id="PS00701">
    <property type="entry name" value="RIBOSOMAL_L16_2"/>
    <property type="match status" value="1"/>
</dbReference>
<reference key="1">
    <citation type="submission" date="2007-03" db="EMBL/GenBank/DDBJ databases">
        <title>Sequencing analysis of Crucihimalaya wallichii chloroplast DNA.</title>
        <authorList>
            <person name="Hosouchi T."/>
            <person name="Tsuruoka H."/>
            <person name="Kotani H."/>
        </authorList>
    </citation>
    <scope>NUCLEOTIDE SEQUENCE [LARGE SCALE GENOMIC DNA]</scope>
</reference>
<feature type="chain" id="PRO_0000354625" description="Large ribosomal subunit protein uL16c">
    <location>
        <begin position="1"/>
        <end position="135"/>
    </location>
</feature>
<protein>
    <recommendedName>
        <fullName evidence="1">Large ribosomal subunit protein uL16c</fullName>
    </recommendedName>
    <alternativeName>
        <fullName evidence="2">50S ribosomal protein L16, chloroplastic</fullName>
    </alternativeName>
</protein>
<evidence type="ECO:0000255" key="1">
    <source>
        <dbReference type="HAMAP-Rule" id="MF_01342"/>
    </source>
</evidence>
<evidence type="ECO:0000305" key="2"/>
<accession>A4QKW8</accession>
<proteinExistence type="inferred from homology"/>
<comment type="subunit">
    <text evidence="1">Part of the 50S ribosomal subunit.</text>
</comment>
<comment type="subcellular location">
    <subcellularLocation>
        <location>Plastid</location>
        <location>Chloroplast</location>
    </subcellularLocation>
</comment>
<comment type="similarity">
    <text evidence="1">Belongs to the universal ribosomal protein uL16 family.</text>
</comment>